<accession>P44159</accession>
<name>Y1316_HAEIN</name>
<proteinExistence type="predicted"/>
<feature type="chain" id="PRO_0000078024" description="Uncharacterized protein HI_1316">
    <location>
        <begin position="1"/>
        <end position="194"/>
    </location>
</feature>
<dbReference type="EMBL" id="L42023">
    <property type="protein sequence ID" value="AAC22970.1"/>
    <property type="molecule type" value="Genomic_DNA"/>
</dbReference>
<dbReference type="PIR" id="F64025">
    <property type="entry name" value="F64025"/>
</dbReference>
<dbReference type="RefSeq" id="NP_439467.2">
    <property type="nucleotide sequence ID" value="NC_000907.1"/>
</dbReference>
<dbReference type="SMR" id="P44159"/>
<dbReference type="STRING" id="71421.HI_1316"/>
<dbReference type="EnsemblBacteria" id="AAC22970">
    <property type="protein sequence ID" value="AAC22970"/>
    <property type="gene ID" value="HI_1316"/>
</dbReference>
<dbReference type="KEGG" id="hin:HI_1316"/>
<dbReference type="PATRIC" id="fig|71421.8.peg.1368"/>
<dbReference type="eggNOG" id="COG3119">
    <property type="taxonomic scope" value="Bacteria"/>
</dbReference>
<dbReference type="HOGENOM" id="CLU_1400761_0_0_6"/>
<dbReference type="OrthoDB" id="9803751at2"/>
<dbReference type="PhylomeDB" id="P44159"/>
<dbReference type="Proteomes" id="UP000000579">
    <property type="component" value="Chromosome"/>
</dbReference>
<dbReference type="Gene3D" id="3.40.720.10">
    <property type="entry name" value="Alkaline Phosphatase, subunit A"/>
    <property type="match status" value="1"/>
</dbReference>
<dbReference type="InterPro" id="IPR017850">
    <property type="entry name" value="Alkaline_phosphatase_core_sf"/>
</dbReference>
<dbReference type="InterPro" id="IPR051849">
    <property type="entry name" value="GAG-degrading_sulfatase"/>
</dbReference>
<dbReference type="InterPro" id="IPR032506">
    <property type="entry name" value="SGSH_C"/>
</dbReference>
<dbReference type="PANTHER" id="PTHR46615">
    <property type="entry name" value="ARYLSULFATASE K"/>
    <property type="match status" value="1"/>
</dbReference>
<dbReference type="PANTHER" id="PTHR46615:SF1">
    <property type="entry name" value="ARYLSULFATASE K"/>
    <property type="match status" value="1"/>
</dbReference>
<dbReference type="Pfam" id="PF16347">
    <property type="entry name" value="SGSH_C"/>
    <property type="match status" value="1"/>
</dbReference>
<dbReference type="SUPFAM" id="SSF53649">
    <property type="entry name" value="Alkaline phosphatase-like"/>
    <property type="match status" value="1"/>
</dbReference>
<gene>
    <name type="ordered locus">HI_1316</name>
</gene>
<organism>
    <name type="scientific">Haemophilus influenzae (strain ATCC 51907 / DSM 11121 / KW20 / Rd)</name>
    <dbReference type="NCBI Taxonomy" id="71421"/>
    <lineage>
        <taxon>Bacteria</taxon>
        <taxon>Pseudomonadati</taxon>
        <taxon>Pseudomonadota</taxon>
        <taxon>Gammaproteobacteria</taxon>
        <taxon>Pasteurellales</taxon>
        <taxon>Pasteurellaceae</taxon>
        <taxon>Haemophilus</taxon>
    </lineage>
</organism>
<sequence length="194" mass="23604">MPEPYYSMYRKEDVVLDKSFFTPLEGKPDHFRTISKMWGMWEASEDHWKEVITKFWGYITLIEDDNLVYLHDLTSTVFDLANQKVPESFEGQSVLPIMRQHQDNQRKGVLGQLAGHFVYFEQRMWRRKDYKLVFNATDVCELYNIRNDPEEMHNLFYDPQYNRIKKEMLEEMRAEMKRLNDPLENWVYRIIDEI</sequence>
<reference key="1">
    <citation type="journal article" date="1995" name="Science">
        <title>Whole-genome random sequencing and assembly of Haemophilus influenzae Rd.</title>
        <authorList>
            <person name="Fleischmann R.D."/>
            <person name="Adams M.D."/>
            <person name="White O."/>
            <person name="Clayton R.A."/>
            <person name="Kirkness E.F."/>
            <person name="Kerlavage A.R."/>
            <person name="Bult C.J."/>
            <person name="Tomb J.-F."/>
            <person name="Dougherty B.A."/>
            <person name="Merrick J.M."/>
            <person name="McKenney K."/>
            <person name="Sutton G.G."/>
            <person name="FitzHugh W."/>
            <person name="Fields C.A."/>
            <person name="Gocayne J.D."/>
            <person name="Scott J.D."/>
            <person name="Shirley R."/>
            <person name="Liu L.-I."/>
            <person name="Glodek A."/>
            <person name="Kelley J.M."/>
            <person name="Weidman J.F."/>
            <person name="Phillips C.A."/>
            <person name="Spriggs T."/>
            <person name="Hedblom E."/>
            <person name="Cotton M.D."/>
            <person name="Utterback T.R."/>
            <person name="Hanna M.C."/>
            <person name="Nguyen D.T."/>
            <person name="Saudek D.M."/>
            <person name="Brandon R.C."/>
            <person name="Fine L.D."/>
            <person name="Fritchman J.L."/>
            <person name="Fuhrmann J.L."/>
            <person name="Geoghagen N.S.M."/>
            <person name="Gnehm C.L."/>
            <person name="McDonald L.A."/>
            <person name="Small K.V."/>
            <person name="Fraser C.M."/>
            <person name="Smith H.O."/>
            <person name="Venter J.C."/>
        </authorList>
    </citation>
    <scope>NUCLEOTIDE SEQUENCE [LARGE SCALE GENOMIC DNA]</scope>
    <source>
        <strain>ATCC 51907 / DSM 11121 / KW20 / Rd</strain>
    </source>
</reference>
<protein>
    <recommendedName>
        <fullName>Uncharacterized protein HI_1316</fullName>
    </recommendedName>
</protein>
<keyword id="KW-1185">Reference proteome</keyword>